<comment type="similarity">
    <text evidence="1">Belongs to the UPF0102 family.</text>
</comment>
<name>Y733_TRIEI</name>
<feature type="chain" id="PRO_0000336281" description="UPF0102 protein Tery_0733">
    <location>
        <begin position="1"/>
        <end position="180"/>
    </location>
</feature>
<proteinExistence type="inferred from homology"/>
<protein>
    <recommendedName>
        <fullName evidence="1">UPF0102 protein Tery_0733</fullName>
    </recommendedName>
</protein>
<reference key="1">
    <citation type="journal article" date="2015" name="Proc. Natl. Acad. Sci. U.S.A.">
        <title>Trichodesmium genome maintains abundant, widespread noncoding DNA in situ, despite oligotrophic lifestyle.</title>
        <authorList>
            <person name="Walworth N."/>
            <person name="Pfreundt U."/>
            <person name="Nelson W.C."/>
            <person name="Mincer T."/>
            <person name="Heidelberg J.F."/>
            <person name="Fu F."/>
            <person name="Waterbury J.B."/>
            <person name="Glavina del Rio T."/>
            <person name="Goodwin L."/>
            <person name="Kyrpides N.C."/>
            <person name="Land M.L."/>
            <person name="Woyke T."/>
            <person name="Hutchins D.A."/>
            <person name="Hess W.R."/>
            <person name="Webb E.A."/>
        </authorList>
    </citation>
    <scope>NUCLEOTIDE SEQUENCE [LARGE SCALE GENOMIC DNA]</scope>
    <source>
        <strain>IMS101</strain>
    </source>
</reference>
<gene>
    <name type="ordered locus">Tery_0733</name>
</gene>
<accession>Q118B0</accession>
<dbReference type="EMBL" id="CP000393">
    <property type="protein sequence ID" value="ABG50164.1"/>
    <property type="molecule type" value="Genomic_DNA"/>
</dbReference>
<dbReference type="RefSeq" id="WP_011610557.1">
    <property type="nucleotide sequence ID" value="NC_008312.1"/>
</dbReference>
<dbReference type="SMR" id="Q118B0"/>
<dbReference type="STRING" id="203124.Tery_0733"/>
<dbReference type="KEGG" id="ter:Tery_0733"/>
<dbReference type="eggNOG" id="COG0792">
    <property type="taxonomic scope" value="Bacteria"/>
</dbReference>
<dbReference type="HOGENOM" id="CLU_115353_3_0_3"/>
<dbReference type="OrthoDB" id="9802516at2"/>
<dbReference type="GO" id="GO:0003676">
    <property type="term" value="F:nucleic acid binding"/>
    <property type="evidence" value="ECO:0007669"/>
    <property type="project" value="InterPro"/>
</dbReference>
<dbReference type="Gene3D" id="3.40.1350.10">
    <property type="match status" value="1"/>
</dbReference>
<dbReference type="HAMAP" id="MF_00048">
    <property type="entry name" value="UPF0102"/>
    <property type="match status" value="1"/>
</dbReference>
<dbReference type="InterPro" id="IPR011335">
    <property type="entry name" value="Restrct_endonuc-II-like"/>
</dbReference>
<dbReference type="InterPro" id="IPR011856">
    <property type="entry name" value="tRNA_endonuc-like_dom_sf"/>
</dbReference>
<dbReference type="InterPro" id="IPR003509">
    <property type="entry name" value="UPF0102_YraN-like"/>
</dbReference>
<dbReference type="NCBIfam" id="TIGR00252">
    <property type="entry name" value="YraN family protein"/>
    <property type="match status" value="1"/>
</dbReference>
<dbReference type="PANTHER" id="PTHR34039">
    <property type="entry name" value="UPF0102 PROTEIN YRAN"/>
    <property type="match status" value="1"/>
</dbReference>
<dbReference type="PANTHER" id="PTHR34039:SF1">
    <property type="entry name" value="UPF0102 PROTEIN YRAN"/>
    <property type="match status" value="1"/>
</dbReference>
<dbReference type="Pfam" id="PF02021">
    <property type="entry name" value="UPF0102"/>
    <property type="match status" value="1"/>
</dbReference>
<dbReference type="SUPFAM" id="SSF52980">
    <property type="entry name" value="Restriction endonuclease-like"/>
    <property type="match status" value="1"/>
</dbReference>
<evidence type="ECO:0000255" key="1">
    <source>
        <dbReference type="HAMAP-Rule" id="MF_00048"/>
    </source>
</evidence>
<sequence>MSLDSSSKSTFISQKIDTGILGEELVAKWLNLEGWQILHRRWQCPWGELDIVATKTTSSLRDSSNYKFPILAFVEVKTRSRGNWDQDGLLAVTESKQAKLWKTAEIFLSDRPELVDYSCRFDVALVRCNYIRKNSQAQKKLSIEQQISELTVDIGNSVELAGYQLVLHNYIASAFIIHLD</sequence>
<organism>
    <name type="scientific">Trichodesmium erythraeum (strain IMS101)</name>
    <dbReference type="NCBI Taxonomy" id="203124"/>
    <lineage>
        <taxon>Bacteria</taxon>
        <taxon>Bacillati</taxon>
        <taxon>Cyanobacteriota</taxon>
        <taxon>Cyanophyceae</taxon>
        <taxon>Oscillatoriophycideae</taxon>
        <taxon>Oscillatoriales</taxon>
        <taxon>Microcoleaceae</taxon>
        <taxon>Trichodesmium</taxon>
    </lineage>
</organism>